<sequence>MLRLVQSNTGFRSLSCRLLSSTKLVTPRFWYSQDNSKAEEIFKRKLIAREKEFRSRLPQWEKRDISLKKRYGVWNPTKKVSRVQMQDIRSLKLQMPNLKTVDMANMFGVSPESIRRILNSKWQPSENDMKKLEKRAERRKAESRERKEQSEQDLKDGVRRIHRAKTIKLQNVRYKETDAINEKDTSKKTASKRQSHAVTGKQGKMKTTIDKPFVPSVADLIK</sequence>
<proteinExistence type="inferred from homology"/>
<feature type="transit peptide" description="Mitochondrion" evidence="2">
    <location>
        <begin position="1"/>
        <end position="26"/>
    </location>
</feature>
<feature type="chain" id="PRO_0000407960" description="Required for respiratory growth protein 9, mitochondrial">
    <location>
        <begin position="27"/>
        <end position="222"/>
    </location>
</feature>
<feature type="region of interest" description="Disordered" evidence="3">
    <location>
        <begin position="120"/>
        <end position="158"/>
    </location>
</feature>
<feature type="region of interest" description="Disordered" evidence="3">
    <location>
        <begin position="177"/>
        <end position="207"/>
    </location>
</feature>
<feature type="compositionally biased region" description="Basic and acidic residues" evidence="3">
    <location>
        <begin position="127"/>
        <end position="158"/>
    </location>
</feature>
<feature type="compositionally biased region" description="Basic and acidic residues" evidence="3">
    <location>
        <begin position="177"/>
        <end position="187"/>
    </location>
</feature>
<comment type="function">
    <text evidence="1">Required for respiratory activity and maintenance and expression of the mitochondrial genome.</text>
</comment>
<comment type="subcellular location">
    <subcellularLocation>
        <location evidence="1">Mitochondrion</location>
    </subcellularLocation>
</comment>
<comment type="similarity">
    <text evidence="4">Belongs to the RRG9 family.</text>
</comment>
<accession>A3LTV8</accession>
<keyword id="KW-0496">Mitochondrion</keyword>
<keyword id="KW-1185">Reference proteome</keyword>
<keyword id="KW-0809">Transit peptide</keyword>
<gene>
    <name type="primary">RRG9</name>
    <name type="ORF">PICST_31550</name>
</gene>
<reference key="1">
    <citation type="journal article" date="2007" name="Nat. Biotechnol.">
        <title>Genome sequence of the lignocellulose-bioconverting and xylose-fermenting yeast Pichia stipitis.</title>
        <authorList>
            <person name="Jeffries T.W."/>
            <person name="Grigoriev I.V."/>
            <person name="Grimwood J."/>
            <person name="Laplaza J.M."/>
            <person name="Aerts A."/>
            <person name="Salamov A."/>
            <person name="Schmutz J."/>
            <person name="Lindquist E."/>
            <person name="Dehal P."/>
            <person name="Shapiro H."/>
            <person name="Jin Y.-S."/>
            <person name="Passoth V."/>
            <person name="Richardson P.M."/>
        </authorList>
    </citation>
    <scope>NUCLEOTIDE SEQUENCE [LARGE SCALE GENOMIC DNA]</scope>
    <source>
        <strain>ATCC 58785 / CBS 6054 / NBRC 10063 / NRRL Y-11545</strain>
    </source>
</reference>
<dbReference type="EMBL" id="CP000498">
    <property type="protein sequence ID" value="ABN66131.2"/>
    <property type="molecule type" value="Genomic_DNA"/>
</dbReference>
<dbReference type="RefSeq" id="XP_001384160.2">
    <property type="nucleotide sequence ID" value="XM_001384123.1"/>
</dbReference>
<dbReference type="SMR" id="A3LTV8"/>
<dbReference type="STRING" id="322104.A3LTV8"/>
<dbReference type="GeneID" id="4838524"/>
<dbReference type="KEGG" id="pic:PICST_31550"/>
<dbReference type="eggNOG" id="ENOG502S7IA">
    <property type="taxonomic scope" value="Eukaryota"/>
</dbReference>
<dbReference type="HOGENOM" id="CLU_106794_0_0_1"/>
<dbReference type="InParanoid" id="A3LTV8"/>
<dbReference type="OMA" id="QPSENDM"/>
<dbReference type="OrthoDB" id="5578174at2759"/>
<dbReference type="Proteomes" id="UP000002258">
    <property type="component" value="Chromosome 4"/>
</dbReference>
<dbReference type="GO" id="GO:0005739">
    <property type="term" value="C:mitochondrion"/>
    <property type="evidence" value="ECO:0007669"/>
    <property type="project" value="UniProtKB-SubCell"/>
</dbReference>
<dbReference type="GO" id="GO:0005634">
    <property type="term" value="C:nucleus"/>
    <property type="evidence" value="ECO:0007669"/>
    <property type="project" value="TreeGrafter"/>
</dbReference>
<dbReference type="InterPro" id="IPR010487">
    <property type="entry name" value="NGRN/Rrg9"/>
</dbReference>
<dbReference type="PANTHER" id="PTHR13475">
    <property type="entry name" value="NEUGRIN"/>
    <property type="match status" value="1"/>
</dbReference>
<dbReference type="PANTHER" id="PTHR13475:SF3">
    <property type="entry name" value="NEUGRIN"/>
    <property type="match status" value="1"/>
</dbReference>
<name>RRG9_PICST</name>
<organism>
    <name type="scientific">Scheffersomyces stipitis (strain ATCC 58785 / CBS 6054 / NBRC 10063 / NRRL Y-11545)</name>
    <name type="common">Yeast</name>
    <name type="synonym">Pichia stipitis</name>
    <dbReference type="NCBI Taxonomy" id="322104"/>
    <lineage>
        <taxon>Eukaryota</taxon>
        <taxon>Fungi</taxon>
        <taxon>Dikarya</taxon>
        <taxon>Ascomycota</taxon>
        <taxon>Saccharomycotina</taxon>
        <taxon>Pichiomycetes</taxon>
        <taxon>Debaryomycetaceae</taxon>
        <taxon>Scheffersomyces</taxon>
    </lineage>
</organism>
<evidence type="ECO:0000250" key="1"/>
<evidence type="ECO:0000255" key="2"/>
<evidence type="ECO:0000256" key="3">
    <source>
        <dbReference type="SAM" id="MobiDB-lite"/>
    </source>
</evidence>
<evidence type="ECO:0000305" key="4"/>
<protein>
    <recommendedName>
        <fullName>Required for respiratory growth protein 9, mitochondrial</fullName>
    </recommendedName>
</protein>